<dbReference type="EC" id="4.2.3.3" evidence="1"/>
<dbReference type="EMBL" id="AE007869">
    <property type="protein sequence ID" value="AAK86005.1"/>
    <property type="molecule type" value="Genomic_DNA"/>
</dbReference>
<dbReference type="PIR" id="AC2599">
    <property type="entry name" value="AC2599"/>
</dbReference>
<dbReference type="PIR" id="D97381">
    <property type="entry name" value="D97381"/>
</dbReference>
<dbReference type="RefSeq" id="NP_353220.1">
    <property type="nucleotide sequence ID" value="NC_003062.2"/>
</dbReference>
<dbReference type="RefSeq" id="WP_006310016.1">
    <property type="nucleotide sequence ID" value="NC_003062.2"/>
</dbReference>
<dbReference type="SMR" id="Q8UIV6"/>
<dbReference type="STRING" id="176299.Atu0185"/>
<dbReference type="EnsemblBacteria" id="AAK86005">
    <property type="protein sequence ID" value="AAK86005"/>
    <property type="gene ID" value="Atu0185"/>
</dbReference>
<dbReference type="GeneID" id="1132223"/>
<dbReference type="KEGG" id="atu:Atu0185"/>
<dbReference type="PATRIC" id="fig|176299.10.peg.176"/>
<dbReference type="eggNOG" id="COG1803">
    <property type="taxonomic scope" value="Bacteria"/>
</dbReference>
<dbReference type="HOGENOM" id="CLU_120420_1_0_5"/>
<dbReference type="OrthoDB" id="9787147at2"/>
<dbReference type="PhylomeDB" id="Q8UIV6"/>
<dbReference type="BioCyc" id="AGRO:ATU0185-MONOMER"/>
<dbReference type="Proteomes" id="UP000000813">
    <property type="component" value="Chromosome circular"/>
</dbReference>
<dbReference type="GO" id="GO:0005829">
    <property type="term" value="C:cytosol"/>
    <property type="evidence" value="ECO:0007669"/>
    <property type="project" value="TreeGrafter"/>
</dbReference>
<dbReference type="GO" id="GO:0008929">
    <property type="term" value="F:methylglyoxal synthase activity"/>
    <property type="evidence" value="ECO:0007669"/>
    <property type="project" value="UniProtKB-UniRule"/>
</dbReference>
<dbReference type="GO" id="GO:0019242">
    <property type="term" value="P:methylglyoxal biosynthetic process"/>
    <property type="evidence" value="ECO:0007669"/>
    <property type="project" value="UniProtKB-UniRule"/>
</dbReference>
<dbReference type="CDD" id="cd01422">
    <property type="entry name" value="MGS"/>
    <property type="match status" value="1"/>
</dbReference>
<dbReference type="Gene3D" id="3.40.50.1380">
    <property type="entry name" value="Methylglyoxal synthase-like domain"/>
    <property type="match status" value="1"/>
</dbReference>
<dbReference type="HAMAP" id="MF_00549">
    <property type="entry name" value="Methylglyoxal_synth"/>
    <property type="match status" value="1"/>
</dbReference>
<dbReference type="InterPro" id="IPR004363">
    <property type="entry name" value="Methylgl_synth"/>
</dbReference>
<dbReference type="InterPro" id="IPR018148">
    <property type="entry name" value="Methylglyoxal_synth_AS"/>
</dbReference>
<dbReference type="InterPro" id="IPR011607">
    <property type="entry name" value="MGS-like_dom"/>
</dbReference>
<dbReference type="InterPro" id="IPR036914">
    <property type="entry name" value="MGS-like_dom_sf"/>
</dbReference>
<dbReference type="NCBIfam" id="TIGR00160">
    <property type="entry name" value="MGSA"/>
    <property type="match status" value="1"/>
</dbReference>
<dbReference type="NCBIfam" id="NF003559">
    <property type="entry name" value="PRK05234.1"/>
    <property type="match status" value="1"/>
</dbReference>
<dbReference type="PANTHER" id="PTHR30492">
    <property type="entry name" value="METHYLGLYOXAL SYNTHASE"/>
    <property type="match status" value="1"/>
</dbReference>
<dbReference type="PANTHER" id="PTHR30492:SF0">
    <property type="entry name" value="METHYLGLYOXAL SYNTHASE"/>
    <property type="match status" value="1"/>
</dbReference>
<dbReference type="Pfam" id="PF02142">
    <property type="entry name" value="MGS"/>
    <property type="match status" value="1"/>
</dbReference>
<dbReference type="PIRSF" id="PIRSF006614">
    <property type="entry name" value="Methylglyox_syn"/>
    <property type="match status" value="1"/>
</dbReference>
<dbReference type="SMART" id="SM00851">
    <property type="entry name" value="MGS"/>
    <property type="match status" value="1"/>
</dbReference>
<dbReference type="SUPFAM" id="SSF52335">
    <property type="entry name" value="Methylglyoxal synthase-like"/>
    <property type="match status" value="1"/>
</dbReference>
<dbReference type="PROSITE" id="PS01335">
    <property type="entry name" value="METHYLGLYOXAL_SYNTH"/>
    <property type="match status" value="1"/>
</dbReference>
<dbReference type="PROSITE" id="PS51855">
    <property type="entry name" value="MGS"/>
    <property type="match status" value="1"/>
</dbReference>
<protein>
    <recommendedName>
        <fullName evidence="1">Methylglyoxal synthase</fullName>
        <shortName evidence="1">MGS</shortName>
        <ecNumber evidence="1">4.2.3.3</ecNumber>
    </recommendedName>
</protein>
<comment type="function">
    <text evidence="1">Catalyzes the formation of methylglyoxal from dihydroxyacetone phosphate.</text>
</comment>
<comment type="catalytic activity">
    <reaction evidence="1">
        <text>dihydroxyacetone phosphate = methylglyoxal + phosphate</text>
        <dbReference type="Rhea" id="RHEA:17937"/>
        <dbReference type="ChEBI" id="CHEBI:17158"/>
        <dbReference type="ChEBI" id="CHEBI:43474"/>
        <dbReference type="ChEBI" id="CHEBI:57642"/>
        <dbReference type="EC" id="4.2.3.3"/>
    </reaction>
</comment>
<comment type="similarity">
    <text evidence="1">Belongs to the methylglyoxal synthase family.</text>
</comment>
<proteinExistence type="inferred from homology"/>
<reference key="1">
    <citation type="journal article" date="2001" name="Science">
        <title>The genome of the natural genetic engineer Agrobacterium tumefaciens C58.</title>
        <authorList>
            <person name="Wood D.W."/>
            <person name="Setubal J.C."/>
            <person name="Kaul R."/>
            <person name="Monks D.E."/>
            <person name="Kitajima J.P."/>
            <person name="Okura V.K."/>
            <person name="Zhou Y."/>
            <person name="Chen L."/>
            <person name="Wood G.E."/>
            <person name="Almeida N.F. Jr."/>
            <person name="Woo L."/>
            <person name="Chen Y."/>
            <person name="Paulsen I.T."/>
            <person name="Eisen J.A."/>
            <person name="Karp P.D."/>
            <person name="Bovee D. Sr."/>
            <person name="Chapman P."/>
            <person name="Clendenning J."/>
            <person name="Deatherage G."/>
            <person name="Gillet W."/>
            <person name="Grant C."/>
            <person name="Kutyavin T."/>
            <person name="Levy R."/>
            <person name="Li M.-J."/>
            <person name="McClelland E."/>
            <person name="Palmieri A."/>
            <person name="Raymond C."/>
            <person name="Rouse G."/>
            <person name="Saenphimmachak C."/>
            <person name="Wu Z."/>
            <person name="Romero P."/>
            <person name="Gordon D."/>
            <person name="Zhang S."/>
            <person name="Yoo H."/>
            <person name="Tao Y."/>
            <person name="Biddle P."/>
            <person name="Jung M."/>
            <person name="Krespan W."/>
            <person name="Perry M."/>
            <person name="Gordon-Kamm B."/>
            <person name="Liao L."/>
            <person name="Kim S."/>
            <person name="Hendrick C."/>
            <person name="Zhao Z.-Y."/>
            <person name="Dolan M."/>
            <person name="Chumley F."/>
            <person name="Tingey S.V."/>
            <person name="Tomb J.-F."/>
            <person name="Gordon M.P."/>
            <person name="Olson M.V."/>
            <person name="Nester E.W."/>
        </authorList>
    </citation>
    <scope>NUCLEOTIDE SEQUENCE [LARGE SCALE GENOMIC DNA]</scope>
    <source>
        <strain>C58 / ATCC 33970</strain>
    </source>
</reference>
<reference key="2">
    <citation type="journal article" date="2001" name="Science">
        <title>Genome sequence of the plant pathogen and biotechnology agent Agrobacterium tumefaciens C58.</title>
        <authorList>
            <person name="Goodner B."/>
            <person name="Hinkle G."/>
            <person name="Gattung S."/>
            <person name="Miller N."/>
            <person name="Blanchard M."/>
            <person name="Qurollo B."/>
            <person name="Goldman B.S."/>
            <person name="Cao Y."/>
            <person name="Askenazi M."/>
            <person name="Halling C."/>
            <person name="Mullin L."/>
            <person name="Houmiel K."/>
            <person name="Gordon J."/>
            <person name="Vaudin M."/>
            <person name="Iartchouk O."/>
            <person name="Epp A."/>
            <person name="Liu F."/>
            <person name="Wollam C."/>
            <person name="Allinger M."/>
            <person name="Doughty D."/>
            <person name="Scott C."/>
            <person name="Lappas C."/>
            <person name="Markelz B."/>
            <person name="Flanagan C."/>
            <person name="Crowell C."/>
            <person name="Gurson J."/>
            <person name="Lomo C."/>
            <person name="Sear C."/>
            <person name="Strub G."/>
            <person name="Cielo C."/>
            <person name="Slater S."/>
        </authorList>
    </citation>
    <scope>NUCLEOTIDE SEQUENCE [LARGE SCALE GENOMIC DNA]</scope>
    <source>
        <strain>C58 / ATCC 33970</strain>
    </source>
</reference>
<keyword id="KW-0456">Lyase</keyword>
<keyword id="KW-1185">Reference proteome</keyword>
<gene>
    <name evidence="1" type="primary">mgsA</name>
    <name type="ordered locus">Atu0185</name>
    <name type="ORF">AGR_C_311</name>
</gene>
<accession>Q8UIV6</accession>
<organism>
    <name type="scientific">Agrobacterium fabrum (strain C58 / ATCC 33970)</name>
    <name type="common">Agrobacterium tumefaciens (strain C58)</name>
    <dbReference type="NCBI Taxonomy" id="176299"/>
    <lineage>
        <taxon>Bacteria</taxon>
        <taxon>Pseudomonadati</taxon>
        <taxon>Pseudomonadota</taxon>
        <taxon>Alphaproteobacteria</taxon>
        <taxon>Hyphomicrobiales</taxon>
        <taxon>Rhizobiaceae</taxon>
        <taxon>Rhizobium/Agrobacterium group</taxon>
        <taxon>Agrobacterium</taxon>
        <taxon>Agrobacterium tumefaciens complex</taxon>
    </lineage>
</organism>
<evidence type="ECO:0000255" key="1">
    <source>
        <dbReference type="HAMAP-Rule" id="MF_00549"/>
    </source>
</evidence>
<sequence>MEGQRCIALIAHDEKKDDMADFARHHQKVLASFRIVATGTTGGRVQEACPGLEVIRLKSGPLGGDQQIGAMIATGEVDMLIFFTDPLTAMPHDVDVKALTRLATVYDIPMALNRATAENLIDFNSAD</sequence>
<name>MGSA_AGRFC</name>
<feature type="chain" id="PRO_0000178605" description="Methylglyoxal synthase">
    <location>
        <begin position="1"/>
        <end position="127"/>
    </location>
</feature>
<feature type="domain" description="MGS-like" evidence="1">
    <location>
        <begin position="1"/>
        <end position="127"/>
    </location>
</feature>
<feature type="active site" description="Proton donor/acceptor" evidence="1">
    <location>
        <position position="65"/>
    </location>
</feature>
<feature type="binding site" evidence="1">
    <location>
        <position position="12"/>
    </location>
    <ligand>
        <name>substrate</name>
    </ligand>
</feature>
<feature type="binding site" evidence="1">
    <location>
        <position position="16"/>
    </location>
    <ligand>
        <name>substrate</name>
    </ligand>
</feature>
<feature type="binding site" evidence="1">
    <location>
        <begin position="38"/>
        <end position="41"/>
    </location>
    <ligand>
        <name>substrate</name>
    </ligand>
</feature>
<feature type="binding site" evidence="1">
    <location>
        <begin position="59"/>
        <end position="60"/>
    </location>
    <ligand>
        <name>substrate</name>
    </ligand>
</feature>
<feature type="binding site" evidence="1">
    <location>
        <position position="92"/>
    </location>
    <ligand>
        <name>substrate</name>
    </ligand>
</feature>